<proteinExistence type="inferred from homology"/>
<name>DAPE_AROAE</name>
<keyword id="KW-0028">Amino-acid biosynthesis</keyword>
<keyword id="KW-0170">Cobalt</keyword>
<keyword id="KW-0220">Diaminopimelate biosynthesis</keyword>
<keyword id="KW-0378">Hydrolase</keyword>
<keyword id="KW-0457">Lysine biosynthesis</keyword>
<keyword id="KW-0479">Metal-binding</keyword>
<keyword id="KW-1185">Reference proteome</keyword>
<keyword id="KW-0862">Zinc</keyword>
<sequence>MTHASSGATFTLACELISRSSVTPDDCGCLDLIAARLAPLGFRFERVDSSGVCNLWARRGGTAPVLCFAGHTDVVPAGPLDGWDSPPFEPTVRGGQLFGRGAADMKTSIAAFVTAIERFVATHPDHVGSIALLLTSDEEGIATHGTVKVVEALAGRGERLDYCVVGEPTSVNTLGDTIKNGRRGSLSGTLRVKGVQGHVAYPQLARNPIHEFAPALAELASIRWDEGNEFFPPTTWQVSNIHAGTGANNVIPGTCEVLFNFRFASVSSADELRQRTHVVLDRHGLDYELDWHLSGKPFLTGRGKLVEALSDAIRDTVGVETELSTSGGTSDGRFIADICNEVVEFGPVNATIHKVNESVALDAIEPLSAIYERTLNALLLPNGD</sequence>
<accession>Q5NYT7</accession>
<gene>
    <name evidence="1" type="primary">dapE</name>
    <name type="ordered locus">AZOSEA36520</name>
    <name type="ORF">ebA6388</name>
</gene>
<dbReference type="EC" id="3.5.1.18" evidence="1"/>
<dbReference type="EMBL" id="CR555306">
    <property type="protein sequence ID" value="CAI09777.1"/>
    <property type="molecule type" value="Genomic_DNA"/>
</dbReference>
<dbReference type="RefSeq" id="WP_011239430.1">
    <property type="nucleotide sequence ID" value="NC_006513.1"/>
</dbReference>
<dbReference type="SMR" id="Q5NYT7"/>
<dbReference type="STRING" id="76114.ebA6388"/>
<dbReference type="KEGG" id="eba:ebA6388"/>
<dbReference type="eggNOG" id="COG0624">
    <property type="taxonomic scope" value="Bacteria"/>
</dbReference>
<dbReference type="HOGENOM" id="CLU_021802_4_0_4"/>
<dbReference type="OrthoDB" id="9809784at2"/>
<dbReference type="UniPathway" id="UPA00034">
    <property type="reaction ID" value="UER00021"/>
</dbReference>
<dbReference type="Proteomes" id="UP000006552">
    <property type="component" value="Chromosome"/>
</dbReference>
<dbReference type="GO" id="GO:0008777">
    <property type="term" value="F:acetylornithine deacetylase activity"/>
    <property type="evidence" value="ECO:0007669"/>
    <property type="project" value="TreeGrafter"/>
</dbReference>
<dbReference type="GO" id="GO:0050897">
    <property type="term" value="F:cobalt ion binding"/>
    <property type="evidence" value="ECO:0007669"/>
    <property type="project" value="UniProtKB-UniRule"/>
</dbReference>
<dbReference type="GO" id="GO:0009014">
    <property type="term" value="F:succinyl-diaminopimelate desuccinylase activity"/>
    <property type="evidence" value="ECO:0007669"/>
    <property type="project" value="UniProtKB-UniRule"/>
</dbReference>
<dbReference type="GO" id="GO:0008270">
    <property type="term" value="F:zinc ion binding"/>
    <property type="evidence" value="ECO:0007669"/>
    <property type="project" value="UniProtKB-UniRule"/>
</dbReference>
<dbReference type="GO" id="GO:0019877">
    <property type="term" value="P:diaminopimelate biosynthetic process"/>
    <property type="evidence" value="ECO:0007669"/>
    <property type="project" value="UniProtKB-UniRule"/>
</dbReference>
<dbReference type="GO" id="GO:0006526">
    <property type="term" value="P:L-arginine biosynthetic process"/>
    <property type="evidence" value="ECO:0007669"/>
    <property type="project" value="TreeGrafter"/>
</dbReference>
<dbReference type="GO" id="GO:0009089">
    <property type="term" value="P:lysine biosynthetic process via diaminopimelate"/>
    <property type="evidence" value="ECO:0007669"/>
    <property type="project" value="UniProtKB-UniRule"/>
</dbReference>
<dbReference type="CDD" id="cd03891">
    <property type="entry name" value="M20_DapE_proteobac"/>
    <property type="match status" value="1"/>
</dbReference>
<dbReference type="FunFam" id="3.30.70.360:FF:000011">
    <property type="entry name" value="Succinyl-diaminopimelate desuccinylase"/>
    <property type="match status" value="1"/>
</dbReference>
<dbReference type="FunFam" id="3.40.630.10:FF:000005">
    <property type="entry name" value="Succinyl-diaminopimelate desuccinylase"/>
    <property type="match status" value="1"/>
</dbReference>
<dbReference type="Gene3D" id="3.40.630.10">
    <property type="entry name" value="Zn peptidases"/>
    <property type="match status" value="2"/>
</dbReference>
<dbReference type="HAMAP" id="MF_01690">
    <property type="entry name" value="DapE"/>
    <property type="match status" value="1"/>
</dbReference>
<dbReference type="InterPro" id="IPR036264">
    <property type="entry name" value="Bact_exopeptidase_dim_dom"/>
</dbReference>
<dbReference type="InterPro" id="IPR005941">
    <property type="entry name" value="DapE_proteobac"/>
</dbReference>
<dbReference type="InterPro" id="IPR002933">
    <property type="entry name" value="Peptidase_M20"/>
</dbReference>
<dbReference type="InterPro" id="IPR011650">
    <property type="entry name" value="Peptidase_M20_dimer"/>
</dbReference>
<dbReference type="InterPro" id="IPR050072">
    <property type="entry name" value="Peptidase_M20A"/>
</dbReference>
<dbReference type="NCBIfam" id="TIGR01246">
    <property type="entry name" value="dapE_proteo"/>
    <property type="match status" value="1"/>
</dbReference>
<dbReference type="NCBIfam" id="NF009557">
    <property type="entry name" value="PRK13009.1"/>
    <property type="match status" value="1"/>
</dbReference>
<dbReference type="PANTHER" id="PTHR43808">
    <property type="entry name" value="ACETYLORNITHINE DEACETYLASE"/>
    <property type="match status" value="1"/>
</dbReference>
<dbReference type="PANTHER" id="PTHR43808:SF31">
    <property type="entry name" value="N-ACETYL-L-CITRULLINE DEACETYLASE"/>
    <property type="match status" value="1"/>
</dbReference>
<dbReference type="Pfam" id="PF07687">
    <property type="entry name" value="M20_dimer"/>
    <property type="match status" value="1"/>
</dbReference>
<dbReference type="Pfam" id="PF01546">
    <property type="entry name" value="Peptidase_M20"/>
    <property type="match status" value="1"/>
</dbReference>
<dbReference type="SUPFAM" id="SSF55031">
    <property type="entry name" value="Bacterial exopeptidase dimerisation domain"/>
    <property type="match status" value="1"/>
</dbReference>
<dbReference type="SUPFAM" id="SSF53187">
    <property type="entry name" value="Zn-dependent exopeptidases"/>
    <property type="match status" value="1"/>
</dbReference>
<feature type="chain" id="PRO_0000375467" description="Succinyl-diaminopimelate desuccinylase">
    <location>
        <begin position="1"/>
        <end position="384"/>
    </location>
</feature>
<feature type="active site" evidence="1">
    <location>
        <position position="73"/>
    </location>
</feature>
<feature type="active site" description="Proton acceptor" evidence="1">
    <location>
        <position position="138"/>
    </location>
</feature>
<feature type="binding site" evidence="1">
    <location>
        <position position="71"/>
    </location>
    <ligand>
        <name>Zn(2+)</name>
        <dbReference type="ChEBI" id="CHEBI:29105"/>
        <label>1</label>
    </ligand>
</feature>
<feature type="binding site" evidence="1">
    <location>
        <position position="104"/>
    </location>
    <ligand>
        <name>Zn(2+)</name>
        <dbReference type="ChEBI" id="CHEBI:29105"/>
        <label>1</label>
    </ligand>
</feature>
<feature type="binding site" evidence="1">
    <location>
        <position position="104"/>
    </location>
    <ligand>
        <name>Zn(2+)</name>
        <dbReference type="ChEBI" id="CHEBI:29105"/>
        <label>2</label>
    </ligand>
</feature>
<feature type="binding site" evidence="1">
    <location>
        <position position="139"/>
    </location>
    <ligand>
        <name>Zn(2+)</name>
        <dbReference type="ChEBI" id="CHEBI:29105"/>
        <label>2</label>
    </ligand>
</feature>
<feature type="binding site" evidence="1">
    <location>
        <position position="167"/>
    </location>
    <ligand>
        <name>Zn(2+)</name>
        <dbReference type="ChEBI" id="CHEBI:29105"/>
        <label>1</label>
    </ligand>
</feature>
<feature type="binding site" evidence="1">
    <location>
        <position position="353"/>
    </location>
    <ligand>
        <name>Zn(2+)</name>
        <dbReference type="ChEBI" id="CHEBI:29105"/>
        <label>2</label>
    </ligand>
</feature>
<reference key="1">
    <citation type="journal article" date="2005" name="Arch. Microbiol.">
        <title>The genome sequence of an anaerobic aromatic-degrading denitrifying bacterium, strain EbN1.</title>
        <authorList>
            <person name="Rabus R."/>
            <person name="Kube M."/>
            <person name="Heider J."/>
            <person name="Beck A."/>
            <person name="Heitmann K."/>
            <person name="Widdel F."/>
            <person name="Reinhardt R."/>
        </authorList>
    </citation>
    <scope>NUCLEOTIDE SEQUENCE [LARGE SCALE GENOMIC DNA]</scope>
    <source>
        <strain>DSM 19018 / LMG 30748 / EbN1</strain>
    </source>
</reference>
<evidence type="ECO:0000255" key="1">
    <source>
        <dbReference type="HAMAP-Rule" id="MF_01690"/>
    </source>
</evidence>
<protein>
    <recommendedName>
        <fullName evidence="1">Succinyl-diaminopimelate desuccinylase</fullName>
        <shortName evidence="1">SDAP desuccinylase</shortName>
        <ecNumber evidence="1">3.5.1.18</ecNumber>
    </recommendedName>
    <alternativeName>
        <fullName evidence="1">N-succinyl-LL-2,6-diaminoheptanedioate amidohydrolase</fullName>
    </alternativeName>
</protein>
<organism>
    <name type="scientific">Aromatoleum aromaticum (strain DSM 19018 / LMG 30748 / EbN1)</name>
    <name type="common">Azoarcus sp. (strain EbN1)</name>
    <dbReference type="NCBI Taxonomy" id="76114"/>
    <lineage>
        <taxon>Bacteria</taxon>
        <taxon>Pseudomonadati</taxon>
        <taxon>Pseudomonadota</taxon>
        <taxon>Betaproteobacteria</taxon>
        <taxon>Rhodocyclales</taxon>
        <taxon>Rhodocyclaceae</taxon>
        <taxon>Aromatoleum</taxon>
    </lineage>
</organism>
<comment type="function">
    <text evidence="1">Catalyzes the hydrolysis of N-succinyl-L,L-diaminopimelic acid (SDAP), forming succinate and LL-2,6-diaminopimelate (DAP), an intermediate involved in the bacterial biosynthesis of lysine and meso-diaminopimelic acid, an essential component of bacterial cell walls.</text>
</comment>
<comment type="catalytic activity">
    <reaction evidence="1">
        <text>N-succinyl-(2S,6S)-2,6-diaminopimelate + H2O = (2S,6S)-2,6-diaminopimelate + succinate</text>
        <dbReference type="Rhea" id="RHEA:22608"/>
        <dbReference type="ChEBI" id="CHEBI:15377"/>
        <dbReference type="ChEBI" id="CHEBI:30031"/>
        <dbReference type="ChEBI" id="CHEBI:57609"/>
        <dbReference type="ChEBI" id="CHEBI:58087"/>
        <dbReference type="EC" id="3.5.1.18"/>
    </reaction>
</comment>
<comment type="cofactor">
    <cofactor evidence="1">
        <name>Zn(2+)</name>
        <dbReference type="ChEBI" id="CHEBI:29105"/>
    </cofactor>
    <cofactor evidence="1">
        <name>Co(2+)</name>
        <dbReference type="ChEBI" id="CHEBI:48828"/>
    </cofactor>
    <text evidence="1">Binds 2 Zn(2+) or Co(2+) ions per subunit.</text>
</comment>
<comment type="pathway">
    <text evidence="1">Amino-acid biosynthesis; L-lysine biosynthesis via DAP pathway; LL-2,6-diaminopimelate from (S)-tetrahydrodipicolinate (succinylase route): step 3/3.</text>
</comment>
<comment type="subunit">
    <text evidence="1">Homodimer.</text>
</comment>
<comment type="similarity">
    <text evidence="1">Belongs to the peptidase M20A family. DapE subfamily.</text>
</comment>